<dbReference type="EMBL" id="AP009384">
    <property type="protein sequence ID" value="BAF90260.1"/>
    <property type="status" value="ALT_INIT"/>
    <property type="molecule type" value="Genomic_DNA"/>
</dbReference>
<dbReference type="SMR" id="A8HT70"/>
<dbReference type="STRING" id="438753.AZC_4262"/>
<dbReference type="KEGG" id="azc:AZC_4262"/>
<dbReference type="eggNOG" id="COG0711">
    <property type="taxonomic scope" value="Bacteria"/>
</dbReference>
<dbReference type="HOGENOM" id="CLU_079215_1_2_5"/>
<dbReference type="Proteomes" id="UP000000270">
    <property type="component" value="Chromosome"/>
</dbReference>
<dbReference type="GO" id="GO:0005886">
    <property type="term" value="C:plasma membrane"/>
    <property type="evidence" value="ECO:0007669"/>
    <property type="project" value="UniProtKB-SubCell"/>
</dbReference>
<dbReference type="GO" id="GO:0045259">
    <property type="term" value="C:proton-transporting ATP synthase complex"/>
    <property type="evidence" value="ECO:0007669"/>
    <property type="project" value="UniProtKB-KW"/>
</dbReference>
<dbReference type="GO" id="GO:0046933">
    <property type="term" value="F:proton-transporting ATP synthase activity, rotational mechanism"/>
    <property type="evidence" value="ECO:0007669"/>
    <property type="project" value="UniProtKB-UniRule"/>
</dbReference>
<dbReference type="GO" id="GO:0046961">
    <property type="term" value="F:proton-transporting ATPase activity, rotational mechanism"/>
    <property type="evidence" value="ECO:0007669"/>
    <property type="project" value="TreeGrafter"/>
</dbReference>
<dbReference type="CDD" id="cd06503">
    <property type="entry name" value="ATP-synt_Fo_b"/>
    <property type="match status" value="1"/>
</dbReference>
<dbReference type="HAMAP" id="MF_01398">
    <property type="entry name" value="ATP_synth_b_bprime"/>
    <property type="match status" value="1"/>
</dbReference>
<dbReference type="InterPro" id="IPR002146">
    <property type="entry name" value="ATP_synth_b/b'su_bac/chlpt"/>
</dbReference>
<dbReference type="InterPro" id="IPR050059">
    <property type="entry name" value="ATP_synthase_B_chain"/>
</dbReference>
<dbReference type="NCBIfam" id="NF006612">
    <property type="entry name" value="PRK09174.1"/>
    <property type="match status" value="1"/>
</dbReference>
<dbReference type="PANTHER" id="PTHR33445:SF1">
    <property type="entry name" value="ATP SYNTHASE SUBUNIT B"/>
    <property type="match status" value="1"/>
</dbReference>
<dbReference type="PANTHER" id="PTHR33445">
    <property type="entry name" value="ATP SYNTHASE SUBUNIT B', CHLOROPLASTIC"/>
    <property type="match status" value="1"/>
</dbReference>
<dbReference type="Pfam" id="PF00430">
    <property type="entry name" value="ATP-synt_B"/>
    <property type="match status" value="1"/>
</dbReference>
<comment type="function">
    <text evidence="1">F(1)F(0) ATP synthase produces ATP from ADP in the presence of a proton or sodium gradient. F-type ATPases consist of two structural domains, F(1) containing the extramembraneous catalytic core and F(0) containing the membrane proton channel, linked together by a central stalk and a peripheral stalk. During catalysis, ATP synthesis in the catalytic domain of F(1) is coupled via a rotary mechanism of the central stalk subunits to proton translocation (By similarity).</text>
</comment>
<comment type="function">
    <text evidence="1">Component of the F(0) channel, it forms part of the peripheral stalk, linking F(1) to F(0). The b'-subunit is a diverged and duplicated form of b found in plants and photosynthetic bacteria (By similarity).</text>
</comment>
<comment type="subunit">
    <text evidence="1">F-type ATPases have 2 components, F(1) - the catalytic core - and F(0) - the membrane proton channel. F(1) has five subunits: alpha(3), beta(3), gamma(1), delta(1), epsilon(1). F(0) has three main subunits: a(1), b(2) and c(10-14). The alpha and beta chains form an alternating ring which encloses part of the gamma chain. F(1) is attached to F(0) by a central stalk formed by the gamma and epsilon chains, while a peripheral stalk is formed by the delta and b chains (By similarity).</text>
</comment>
<comment type="subcellular location">
    <subcellularLocation>
        <location evidence="1">Cell inner membrane</location>
        <topology evidence="1">Single-pass membrane protein</topology>
    </subcellularLocation>
</comment>
<comment type="similarity">
    <text evidence="4">Belongs to the ATPase B chain family.</text>
</comment>
<comment type="sequence caution" evidence="4">
    <conflict type="erroneous initiation">
        <sequence resource="EMBL-CDS" id="BAF90260"/>
    </conflict>
    <text>Extended N-terminus.</text>
</comment>
<evidence type="ECO:0000250" key="1"/>
<evidence type="ECO:0000255" key="2"/>
<evidence type="ECO:0000256" key="3">
    <source>
        <dbReference type="SAM" id="MobiDB-lite"/>
    </source>
</evidence>
<evidence type="ECO:0000305" key="4"/>
<proteinExistence type="inferred from homology"/>
<feature type="chain" id="PRO_0000368999" description="ATP synthase subunit b 2">
    <location>
        <begin position="1"/>
        <end position="196"/>
    </location>
</feature>
<feature type="transmembrane region" description="Helical" evidence="2">
    <location>
        <begin position="41"/>
        <end position="60"/>
    </location>
</feature>
<feature type="region of interest" description="Disordered" evidence="3">
    <location>
        <begin position="1"/>
        <end position="33"/>
    </location>
</feature>
<feature type="compositionally biased region" description="Low complexity" evidence="3">
    <location>
        <begin position="1"/>
        <end position="18"/>
    </location>
</feature>
<gene>
    <name type="primary">atpF2</name>
    <name type="synonym">atpG</name>
    <name type="ordered locus">AZC_4262</name>
</gene>
<organism>
    <name type="scientific">Azorhizobium caulinodans (strain ATCC 43989 / DSM 5975 / JCM 20966 / LMG 6465 / NBRC 14845 / NCIMB 13405 / ORS 571)</name>
    <dbReference type="NCBI Taxonomy" id="438753"/>
    <lineage>
        <taxon>Bacteria</taxon>
        <taxon>Pseudomonadati</taxon>
        <taxon>Pseudomonadota</taxon>
        <taxon>Alphaproteobacteria</taxon>
        <taxon>Hyphomicrobiales</taxon>
        <taxon>Xanthobacteraceae</taxon>
        <taxon>Azorhizobium</taxon>
    </lineage>
</organism>
<keyword id="KW-0066">ATP synthesis</keyword>
<keyword id="KW-0997">Cell inner membrane</keyword>
<keyword id="KW-1003">Cell membrane</keyword>
<keyword id="KW-0138">CF(0)</keyword>
<keyword id="KW-0375">Hydrogen ion transport</keyword>
<keyword id="KW-0406">Ion transport</keyword>
<keyword id="KW-0472">Membrane</keyword>
<keyword id="KW-1185">Reference proteome</keyword>
<keyword id="KW-0812">Transmembrane</keyword>
<keyword id="KW-1133">Transmembrane helix</keyword>
<keyword id="KW-0813">Transport</keyword>
<sequence length="196" mass="20443">MVVAQAGAPAHPPAAHGAEAGHGEAAGGEHGGFPPFKPQHFASQLIWLIVSFGALYFLMSRVTLPRIGRILEERHDRIAKDLEEARLRQAESEAAQAAYEKALTEARGKANAIAGEARARLAAETDANRKSLEENLNAKLADAERRIASTKATALSHVRGIAVDTTGAIVTALVGTPAGNQDVESAVDAALAAKSA</sequence>
<name>ATPF2_AZOC5</name>
<reference key="1">
    <citation type="submission" date="2007-04" db="EMBL/GenBank/DDBJ databases">
        <title>Complete genome sequence of the nitrogen-fixing bacterium Azorhizobium caulinodans ORS571.</title>
        <authorList>
            <person name="Lee K.B."/>
            <person name="Backer P.D."/>
            <person name="Aono T."/>
            <person name="Liu C.T."/>
            <person name="Suzuki S."/>
            <person name="Suzuki T."/>
            <person name="Kaneko T."/>
            <person name="Yamada M."/>
            <person name="Tabata S."/>
            <person name="Kupfer D.M."/>
            <person name="Najar F.Z."/>
            <person name="Wiley G.B."/>
            <person name="Roe B."/>
            <person name="Binnewies T."/>
            <person name="Ussery D."/>
            <person name="Vereecke D."/>
            <person name="Gevers D."/>
            <person name="Holsters M."/>
            <person name="Oyaizu H."/>
        </authorList>
    </citation>
    <scope>NUCLEOTIDE SEQUENCE [LARGE SCALE GENOMIC DNA]</scope>
    <source>
        <strain>ATCC 43989 / DSM 5975 / JCM 20966 / LMG 6465 / NBRC 14845 / NCIMB 13405 / ORS 571</strain>
    </source>
</reference>
<protein>
    <recommendedName>
        <fullName>ATP synthase subunit b 2</fullName>
    </recommendedName>
    <alternativeName>
        <fullName>ATP synthase F(0) sector subunit b 2</fullName>
    </alternativeName>
    <alternativeName>
        <fullName>ATPase subunit I 2</fullName>
    </alternativeName>
    <alternativeName>
        <fullName>F-type ATPase subunit b 2</fullName>
        <shortName>F-ATPase subunit b 2</shortName>
    </alternativeName>
</protein>
<accession>A8HT70</accession>